<feature type="chain" id="PRO_1000026004" description="Thiazole synthase">
    <location>
        <begin position="1"/>
        <end position="260"/>
    </location>
</feature>
<feature type="active site" description="Schiff-base intermediate with DXP" evidence="1">
    <location>
        <position position="96"/>
    </location>
</feature>
<feature type="binding site" evidence="1">
    <location>
        <position position="157"/>
    </location>
    <ligand>
        <name>1-deoxy-D-xylulose 5-phosphate</name>
        <dbReference type="ChEBI" id="CHEBI:57792"/>
    </ligand>
</feature>
<feature type="binding site" evidence="1">
    <location>
        <begin position="183"/>
        <end position="184"/>
    </location>
    <ligand>
        <name>1-deoxy-D-xylulose 5-phosphate</name>
        <dbReference type="ChEBI" id="CHEBI:57792"/>
    </ligand>
</feature>
<feature type="binding site" evidence="1">
    <location>
        <begin position="205"/>
        <end position="206"/>
    </location>
    <ligand>
        <name>1-deoxy-D-xylulose 5-phosphate</name>
        <dbReference type="ChEBI" id="CHEBI:57792"/>
    </ligand>
</feature>
<sequence>MLHIADKTFDSHLIMGTGGATSQALLEESLVASGTQLTTVAMRRHQATTSSGESIFAMLRRLEIALLPNTAGCRTARDAVLTAQLAREALDTNWVKVEVIADEHTLLPDTVELLDACELLVHDGFTVLAYTSDDPITASRLEDCGVAAVMPLGSPIGTGLGILNPHNIELICSRASVPVILDAGVGTASDATLAMELGCDGVLLASAINRAQNPVAMAKSMFHAVEAGRLAAQAGRIPQRQHAVASSSFEGLASWAEQVL</sequence>
<keyword id="KW-0963">Cytoplasm</keyword>
<keyword id="KW-0704">Schiff base</keyword>
<keyword id="KW-0784">Thiamine biosynthesis</keyword>
<keyword id="KW-0808">Transferase</keyword>
<gene>
    <name evidence="1" type="primary">thiG</name>
    <name type="ordered locus">cgR_1929</name>
</gene>
<organism>
    <name type="scientific">Corynebacterium glutamicum (strain R)</name>
    <dbReference type="NCBI Taxonomy" id="340322"/>
    <lineage>
        <taxon>Bacteria</taxon>
        <taxon>Bacillati</taxon>
        <taxon>Actinomycetota</taxon>
        <taxon>Actinomycetes</taxon>
        <taxon>Mycobacteriales</taxon>
        <taxon>Corynebacteriaceae</taxon>
        <taxon>Corynebacterium</taxon>
    </lineage>
</organism>
<proteinExistence type="inferred from homology"/>
<reference key="1">
    <citation type="journal article" date="2007" name="Microbiology">
        <title>Comparative analysis of the Corynebacterium glutamicum group and complete genome sequence of strain R.</title>
        <authorList>
            <person name="Yukawa H."/>
            <person name="Omumasaba C.A."/>
            <person name="Nonaka H."/>
            <person name="Kos P."/>
            <person name="Okai N."/>
            <person name="Suzuki N."/>
            <person name="Suda M."/>
            <person name="Tsuge Y."/>
            <person name="Watanabe J."/>
            <person name="Ikeda Y."/>
            <person name="Vertes A.A."/>
            <person name="Inui M."/>
        </authorList>
    </citation>
    <scope>NUCLEOTIDE SEQUENCE [LARGE SCALE GENOMIC DNA]</scope>
    <source>
        <strain>R</strain>
    </source>
</reference>
<protein>
    <recommendedName>
        <fullName evidence="1">Thiazole synthase</fullName>
        <ecNumber evidence="1">2.8.1.10</ecNumber>
    </recommendedName>
</protein>
<comment type="function">
    <text evidence="1">Catalyzes the rearrangement of 1-deoxy-D-xylulose 5-phosphate (DXP) to produce the thiazole phosphate moiety of thiamine. Sulfur is provided by the thiocarboxylate moiety of the carrier protein ThiS. In vitro, sulfur can be provided by H(2)S.</text>
</comment>
<comment type="catalytic activity">
    <reaction evidence="1">
        <text>[ThiS sulfur-carrier protein]-C-terminal-Gly-aminoethanethioate + 2-iminoacetate + 1-deoxy-D-xylulose 5-phosphate = [ThiS sulfur-carrier protein]-C-terminal Gly-Gly + 2-[(2R,5Z)-2-carboxy-4-methylthiazol-5(2H)-ylidene]ethyl phosphate + 2 H2O + H(+)</text>
        <dbReference type="Rhea" id="RHEA:26297"/>
        <dbReference type="Rhea" id="RHEA-COMP:12909"/>
        <dbReference type="Rhea" id="RHEA-COMP:19908"/>
        <dbReference type="ChEBI" id="CHEBI:15377"/>
        <dbReference type="ChEBI" id="CHEBI:15378"/>
        <dbReference type="ChEBI" id="CHEBI:57792"/>
        <dbReference type="ChEBI" id="CHEBI:62899"/>
        <dbReference type="ChEBI" id="CHEBI:77846"/>
        <dbReference type="ChEBI" id="CHEBI:90778"/>
        <dbReference type="ChEBI" id="CHEBI:232372"/>
        <dbReference type="EC" id="2.8.1.10"/>
    </reaction>
</comment>
<comment type="pathway">
    <text evidence="1">Cofactor biosynthesis; thiamine diphosphate biosynthesis.</text>
</comment>
<comment type="subunit">
    <text evidence="1">Homotetramer. Forms heterodimers with either ThiH or ThiS.</text>
</comment>
<comment type="subcellular location">
    <subcellularLocation>
        <location evidence="1">Cytoplasm</location>
    </subcellularLocation>
</comment>
<comment type="similarity">
    <text evidence="1">Belongs to the ThiG family.</text>
</comment>
<evidence type="ECO:0000255" key="1">
    <source>
        <dbReference type="HAMAP-Rule" id="MF_00443"/>
    </source>
</evidence>
<name>THIG_CORGB</name>
<accession>A4QFA8</accession>
<dbReference type="EC" id="2.8.1.10" evidence="1"/>
<dbReference type="EMBL" id="AP009044">
    <property type="protein sequence ID" value="BAF54924.1"/>
    <property type="molecule type" value="Genomic_DNA"/>
</dbReference>
<dbReference type="RefSeq" id="WP_003861895.1">
    <property type="nucleotide sequence ID" value="NC_009342.1"/>
</dbReference>
<dbReference type="SMR" id="A4QFA8"/>
<dbReference type="KEGG" id="cgt:cgR_1929"/>
<dbReference type="HOGENOM" id="CLU_062233_1_0_11"/>
<dbReference type="PhylomeDB" id="A4QFA8"/>
<dbReference type="UniPathway" id="UPA00060"/>
<dbReference type="Proteomes" id="UP000006698">
    <property type="component" value="Chromosome"/>
</dbReference>
<dbReference type="GO" id="GO:0005737">
    <property type="term" value="C:cytoplasm"/>
    <property type="evidence" value="ECO:0007669"/>
    <property type="project" value="UniProtKB-SubCell"/>
</dbReference>
<dbReference type="GO" id="GO:1990107">
    <property type="term" value="F:thiazole synthase activity"/>
    <property type="evidence" value="ECO:0007669"/>
    <property type="project" value="UniProtKB-EC"/>
</dbReference>
<dbReference type="GO" id="GO:0009229">
    <property type="term" value="P:thiamine diphosphate biosynthetic process"/>
    <property type="evidence" value="ECO:0007669"/>
    <property type="project" value="UniProtKB-UniRule"/>
</dbReference>
<dbReference type="CDD" id="cd04728">
    <property type="entry name" value="ThiG"/>
    <property type="match status" value="1"/>
</dbReference>
<dbReference type="Gene3D" id="3.20.20.70">
    <property type="entry name" value="Aldolase class I"/>
    <property type="match status" value="1"/>
</dbReference>
<dbReference type="HAMAP" id="MF_00443">
    <property type="entry name" value="ThiG"/>
    <property type="match status" value="1"/>
</dbReference>
<dbReference type="InterPro" id="IPR013785">
    <property type="entry name" value="Aldolase_TIM"/>
</dbReference>
<dbReference type="InterPro" id="IPR033983">
    <property type="entry name" value="Thiazole_synthase_ThiG"/>
</dbReference>
<dbReference type="InterPro" id="IPR008867">
    <property type="entry name" value="ThiG"/>
</dbReference>
<dbReference type="PANTHER" id="PTHR34266">
    <property type="entry name" value="THIAZOLE SYNTHASE"/>
    <property type="match status" value="1"/>
</dbReference>
<dbReference type="PANTHER" id="PTHR34266:SF2">
    <property type="entry name" value="THIAZOLE SYNTHASE"/>
    <property type="match status" value="1"/>
</dbReference>
<dbReference type="Pfam" id="PF05690">
    <property type="entry name" value="ThiG"/>
    <property type="match status" value="1"/>
</dbReference>
<dbReference type="SUPFAM" id="SSF110399">
    <property type="entry name" value="ThiG-like"/>
    <property type="match status" value="1"/>
</dbReference>